<keyword id="KW-0007">Acetylation</keyword>
<keyword id="KW-0106">Calcium</keyword>
<keyword id="KW-0479">Metal-binding</keyword>
<keyword id="KW-0488">Methylation</keyword>
<keyword id="KW-0677">Repeat</keyword>
<comment type="function">
    <text>Calmodulin mediates the control of a large number of enzymes, ion channels and other proteins by Ca(2+). Among the enzymes to be stimulated by the calmodulin-Ca(2+) complex are a number of protein kinases and phosphatases.</text>
</comment>
<comment type="miscellaneous">
    <text>This protein has four functional calcium-binding sites.</text>
</comment>
<comment type="similarity">
    <text evidence="3">Belongs to the calmodulin family.</text>
</comment>
<organism>
    <name type="scientific">Fagus sylvatica</name>
    <name type="common">Beechnut</name>
    <dbReference type="NCBI Taxonomy" id="28930"/>
    <lineage>
        <taxon>Eukaryota</taxon>
        <taxon>Viridiplantae</taxon>
        <taxon>Streptophyta</taxon>
        <taxon>Embryophyta</taxon>
        <taxon>Tracheophyta</taxon>
        <taxon>Spermatophyta</taxon>
        <taxon>Magnoliopsida</taxon>
        <taxon>eudicotyledons</taxon>
        <taxon>Gunneridae</taxon>
        <taxon>Pentapetalae</taxon>
        <taxon>rosids</taxon>
        <taxon>fabids</taxon>
        <taxon>Fagales</taxon>
        <taxon>Fagaceae</taxon>
        <taxon>Fagus</taxon>
    </lineage>
</organism>
<protein>
    <recommendedName>
        <fullName>Calmodulin</fullName>
        <shortName>CaM</shortName>
    </recommendedName>
</protein>
<proteinExistence type="evidence at transcript level"/>
<feature type="initiator methionine" description="Removed" evidence="1">
    <location>
        <position position="1"/>
    </location>
</feature>
<feature type="chain" id="PRO_0000198289" description="Calmodulin">
    <location>
        <begin position="2"/>
        <end position="148"/>
    </location>
</feature>
<feature type="domain" description="EF-hand 1" evidence="2">
    <location>
        <begin position="8"/>
        <end position="43"/>
    </location>
</feature>
<feature type="domain" description="EF-hand 2" evidence="2">
    <location>
        <begin position="44"/>
        <end position="79"/>
    </location>
</feature>
<feature type="domain" description="EF-hand 3" evidence="2">
    <location>
        <begin position="81"/>
        <end position="116"/>
    </location>
</feature>
<feature type="domain" description="EF-hand 4" evidence="2">
    <location>
        <begin position="116"/>
        <end position="148"/>
    </location>
</feature>
<feature type="binding site" evidence="2">
    <location>
        <position position="21"/>
    </location>
    <ligand>
        <name>Ca(2+)</name>
        <dbReference type="ChEBI" id="CHEBI:29108"/>
        <label>1</label>
    </ligand>
</feature>
<feature type="binding site" evidence="2">
    <location>
        <position position="23"/>
    </location>
    <ligand>
        <name>Ca(2+)</name>
        <dbReference type="ChEBI" id="CHEBI:29108"/>
        <label>1</label>
    </ligand>
</feature>
<feature type="binding site" evidence="2">
    <location>
        <position position="25"/>
    </location>
    <ligand>
        <name>Ca(2+)</name>
        <dbReference type="ChEBI" id="CHEBI:29108"/>
        <label>1</label>
    </ligand>
</feature>
<feature type="binding site" evidence="2">
    <location>
        <position position="27"/>
    </location>
    <ligand>
        <name>Ca(2+)</name>
        <dbReference type="ChEBI" id="CHEBI:29108"/>
        <label>1</label>
    </ligand>
</feature>
<feature type="binding site" evidence="2">
    <location>
        <position position="32"/>
    </location>
    <ligand>
        <name>Ca(2+)</name>
        <dbReference type="ChEBI" id="CHEBI:29108"/>
        <label>1</label>
    </ligand>
</feature>
<feature type="binding site" evidence="2">
    <location>
        <position position="57"/>
    </location>
    <ligand>
        <name>Ca(2+)</name>
        <dbReference type="ChEBI" id="CHEBI:29108"/>
        <label>2</label>
    </ligand>
</feature>
<feature type="binding site" evidence="2">
    <location>
        <position position="59"/>
    </location>
    <ligand>
        <name>Ca(2+)</name>
        <dbReference type="ChEBI" id="CHEBI:29108"/>
        <label>2</label>
    </ligand>
</feature>
<feature type="binding site" evidence="2">
    <location>
        <position position="61"/>
    </location>
    <ligand>
        <name>Ca(2+)</name>
        <dbReference type="ChEBI" id="CHEBI:29108"/>
        <label>2</label>
    </ligand>
</feature>
<feature type="binding site" evidence="2">
    <location>
        <position position="63"/>
    </location>
    <ligand>
        <name>Ca(2+)</name>
        <dbReference type="ChEBI" id="CHEBI:29108"/>
        <label>2</label>
    </ligand>
</feature>
<feature type="binding site" evidence="2">
    <location>
        <position position="68"/>
    </location>
    <ligand>
        <name>Ca(2+)</name>
        <dbReference type="ChEBI" id="CHEBI:29108"/>
        <label>2</label>
    </ligand>
</feature>
<feature type="binding site" evidence="2">
    <location>
        <position position="94"/>
    </location>
    <ligand>
        <name>Ca(2+)</name>
        <dbReference type="ChEBI" id="CHEBI:29108"/>
        <label>3</label>
    </ligand>
</feature>
<feature type="binding site" evidence="2">
    <location>
        <position position="96"/>
    </location>
    <ligand>
        <name>Ca(2+)</name>
        <dbReference type="ChEBI" id="CHEBI:29108"/>
        <label>3</label>
    </ligand>
</feature>
<feature type="binding site" evidence="2">
    <location>
        <position position="98"/>
    </location>
    <ligand>
        <name>Ca(2+)</name>
        <dbReference type="ChEBI" id="CHEBI:29108"/>
        <label>3</label>
    </ligand>
</feature>
<feature type="binding site" evidence="2">
    <location>
        <position position="105"/>
    </location>
    <ligand>
        <name>Ca(2+)</name>
        <dbReference type="ChEBI" id="CHEBI:29108"/>
        <label>3</label>
    </ligand>
</feature>
<feature type="binding site" evidence="2">
    <location>
        <position position="129"/>
    </location>
    <ligand>
        <name>Ca(2+)</name>
        <dbReference type="ChEBI" id="CHEBI:29108"/>
        <label>4</label>
    </ligand>
</feature>
<feature type="binding site" evidence="2">
    <location>
        <position position="131"/>
    </location>
    <ligand>
        <name>Ca(2+)</name>
        <dbReference type="ChEBI" id="CHEBI:29108"/>
        <label>4</label>
    </ligand>
</feature>
<feature type="binding site" evidence="2">
    <location>
        <position position="133"/>
    </location>
    <ligand>
        <name>Ca(2+)</name>
        <dbReference type="ChEBI" id="CHEBI:29108"/>
        <label>4</label>
    </ligand>
</feature>
<feature type="binding site" evidence="2">
    <location>
        <position position="135"/>
    </location>
    <ligand>
        <name>Ca(2+)</name>
        <dbReference type="ChEBI" id="CHEBI:29108"/>
        <label>4</label>
    </ligand>
</feature>
<feature type="binding site" evidence="2">
    <location>
        <position position="140"/>
    </location>
    <ligand>
        <name>Ca(2+)</name>
        <dbReference type="ChEBI" id="CHEBI:29108"/>
        <label>4</label>
    </ligand>
</feature>
<feature type="modified residue" description="N-acetylalanine" evidence="1">
    <location>
        <position position="2"/>
    </location>
</feature>
<feature type="modified residue" description="N6,N6,N6-trimethyllysine" evidence="1">
    <location>
        <position position="116"/>
    </location>
</feature>
<feature type="sequence conflict" description="In Ref. 2; CAA66148." evidence="3" ref="2">
    <original>GQNPTEAELQDM</original>
    <variation>ARTQLRQSCRTL</variation>
    <location>
        <begin position="41"/>
        <end position="52"/>
    </location>
</feature>
<feature type="sequence conflict" description="In Ref. 2; CAA66148." evidence="3" ref="2">
    <original>FD</original>
    <variation>ST</variation>
    <location>
        <begin position="93"/>
        <end position="94"/>
    </location>
</feature>
<evidence type="ECO:0000250" key="1"/>
<evidence type="ECO:0000255" key="2">
    <source>
        <dbReference type="PROSITE-ProRule" id="PRU00448"/>
    </source>
</evidence>
<evidence type="ECO:0000305" key="3"/>
<gene>
    <name type="primary">CAMF1</name>
    <name type="synonym">CAMF-1</name>
</gene>
<accession>Q39752</accession>
<accession>Q39753</accession>
<sequence>MADQLTDDQISEFKEAFSLFDKDGDGCITTKELGTVMRSLGQNPTEAELQDMINEVDRDGNGTIDFPEFLNLMARKMKDTDSEEELKEAFRVFDKDQNGFISAAELRHVMTNLGEKLTDEVDEMIREADVDGDGQINYEEFVKVMMAK</sequence>
<reference key="1">
    <citation type="online journal article" date="1997" name="Plant Gene Register">
        <title>Isolation, sequencing and expression of a calmodulin-coding cDNA from Fagus sylvatica L. seeds.</title>
        <authorList>
            <person name="Nicolas C."/>
            <person name="Nicolas G."/>
            <person name="Rodriguez D."/>
        </authorList>
        <locator>PGR97-009</locator>
    </citation>
    <scope>NUCLEOTIDE SEQUENCE [MRNA]</scope>
    <source>
        <tissue>Seed</tissue>
    </source>
</reference>
<reference key="2">
    <citation type="journal article" date="1996" name="Physiol. Plantarum">
        <title>Antagonistic effect of abscisic acid and gibberellic acid on the breaking of dormancy of Fagus sylvatica seeds.</title>
        <authorList>
            <person name="Nicolas C."/>
            <person name="Nicolas G."/>
            <person name="Rodriguez D."/>
        </authorList>
    </citation>
    <scope>NUCLEOTIDE SEQUENCE [MRNA]</scope>
    <source>
        <tissue>Seed</tissue>
    </source>
</reference>
<dbReference type="EMBL" id="X97612">
    <property type="protein sequence ID" value="CAA66215.1"/>
    <property type="molecule type" value="mRNA"/>
</dbReference>
<dbReference type="EMBL" id="X97546">
    <property type="protein sequence ID" value="CAA66148.1"/>
    <property type="molecule type" value="mRNA"/>
</dbReference>
<dbReference type="SMR" id="Q39752"/>
<dbReference type="GO" id="GO:0016460">
    <property type="term" value="C:myosin II complex"/>
    <property type="evidence" value="ECO:0007669"/>
    <property type="project" value="TreeGrafter"/>
</dbReference>
<dbReference type="GO" id="GO:0005509">
    <property type="term" value="F:calcium ion binding"/>
    <property type="evidence" value="ECO:0007669"/>
    <property type="project" value="InterPro"/>
</dbReference>
<dbReference type="CDD" id="cd00051">
    <property type="entry name" value="EFh"/>
    <property type="match status" value="2"/>
</dbReference>
<dbReference type="FunFam" id="1.10.238.10:FF:000034">
    <property type="entry name" value="Calmodulin"/>
    <property type="match status" value="1"/>
</dbReference>
<dbReference type="FunFam" id="1.10.238.10:FF:000042">
    <property type="entry name" value="Calmodulin"/>
    <property type="match status" value="1"/>
</dbReference>
<dbReference type="Gene3D" id="1.10.238.10">
    <property type="entry name" value="EF-hand"/>
    <property type="match status" value="3"/>
</dbReference>
<dbReference type="InterPro" id="IPR050230">
    <property type="entry name" value="CALM/Myosin/TropC-like"/>
</dbReference>
<dbReference type="InterPro" id="IPR011992">
    <property type="entry name" value="EF-hand-dom_pair"/>
</dbReference>
<dbReference type="InterPro" id="IPR018247">
    <property type="entry name" value="EF_Hand_1_Ca_BS"/>
</dbReference>
<dbReference type="InterPro" id="IPR002048">
    <property type="entry name" value="EF_hand_dom"/>
</dbReference>
<dbReference type="PANTHER" id="PTHR23048:SF53">
    <property type="entry name" value="CALMODULIN"/>
    <property type="match status" value="1"/>
</dbReference>
<dbReference type="PANTHER" id="PTHR23048">
    <property type="entry name" value="MYOSIN LIGHT CHAIN 1, 3"/>
    <property type="match status" value="1"/>
</dbReference>
<dbReference type="Pfam" id="PF13499">
    <property type="entry name" value="EF-hand_7"/>
    <property type="match status" value="2"/>
</dbReference>
<dbReference type="SMART" id="SM00054">
    <property type="entry name" value="EFh"/>
    <property type="match status" value="4"/>
</dbReference>
<dbReference type="SUPFAM" id="SSF47473">
    <property type="entry name" value="EF-hand"/>
    <property type="match status" value="1"/>
</dbReference>
<dbReference type="PROSITE" id="PS00018">
    <property type="entry name" value="EF_HAND_1"/>
    <property type="match status" value="4"/>
</dbReference>
<dbReference type="PROSITE" id="PS50222">
    <property type="entry name" value="EF_HAND_2"/>
    <property type="match status" value="4"/>
</dbReference>
<name>CALM_FAGSY</name>